<proteinExistence type="evidence at protein level"/>
<comment type="function">
    <text evidence="3">Possible ribosyltransferase/DNA-binding component of antiviral defense system retron Ec73, composed of a non-coding RNA (ncRNA) followed by this protein then a reverse transcriptase (RT). Expression of this retron confers protection against bacteriophages SECphi4, SECphi6, SECphi27 and P1. At multiplicity of infection (MOI) of 0.02 cultures grow normally when infected with SECphi4 without collapsing, at MOI 2 cultures enter growth stasis.</text>
</comment>
<comment type="disruption phenotype">
    <text evidence="2">Not required for msDNA production.</text>
</comment>
<comment type="miscellaneous">
    <text evidence="1 2">Part of pro-retronphage phiR73, which is homologous to bacteriophage P4 (PubMed:1712012). With the help of P2 bacteriophage, is excised and packaged into an infectious virion. Retronphage phiR73 can lysogenize a new host strain, reintegrating its genome into the selC gene of the host chromosome and enabling the newly formed lysogens to produce msDNA-Ec73 (PubMed:1709758).</text>
</comment>
<gene>
    <name type="ORF">Ga0175965_1549</name>
    <name evidence="5" type="ORF">RG59_11965</name>
</gene>
<name>RIB73_ECOLX</name>
<reference evidence="7" key="1">
    <citation type="journal article" date="1991" name="J. Bacteriol.">
        <title>Association of a retroelement with a P4-like cryptic prophage (retronphage phi R73) integrated into the selenocystyl tRNA gene of Escherichia coli.</title>
        <authorList>
            <person name="Sun J."/>
            <person name="Inouye M."/>
            <person name="Inouye S."/>
        </authorList>
    </citation>
    <scope>NUCLEOTIDE SEQUENCE [GENOMIC DNA]</scope>
    <scope>DISRUPTION PHENOTYPE</scope>
    <source>
        <strain>C1-23</strain>
    </source>
</reference>
<reference evidence="6" key="2">
    <citation type="submission" date="2014-11" db="EMBL/GenBank/DDBJ databases">
        <title>Vertical and Horizontal Evolutionary Story implied from E. coli complete genomes.</title>
        <authorList>
            <person name="Jiang J."/>
            <person name="Xu Z."/>
            <person name="Zhou Y."/>
            <person name="Zhao H."/>
            <person name="Leung F.C.C."/>
        </authorList>
    </citation>
    <scope>NUCLEOTIDE SEQUENCE [LARGE SCALE GENOMIC DNA]</scope>
    <source>
        <strain>M10</strain>
    </source>
</reference>
<reference key="3">
    <citation type="journal article" date="1991" name="Science">
        <title>Retronphage phi R73: an E. coli phage that contains a retroelement and integrates into a tRNA gene.</title>
        <authorList>
            <person name="Inouye S."/>
            <person name="Sunshine M.G."/>
            <person name="Six E.W."/>
            <person name="Inouye M."/>
        </authorList>
    </citation>
    <scope>FUNCTION</scope>
    <scope>PROPHAGE EXCISION AND REINFECTION</scope>
    <source>
        <strain>C1-23</strain>
    </source>
</reference>
<reference key="4">
    <citation type="journal article" date="2020" name="Cell">
        <title>Bacterial Retrons Function In Anti-Phage Defense.</title>
        <authorList>
            <person name="Millman A."/>
            <person name="Bernheim A."/>
            <person name="Stokar-Avihail A."/>
            <person name="Fedorenko T."/>
            <person name="Voichek M."/>
            <person name="Leavitt A."/>
            <person name="Oppenheimer-Shaanan Y."/>
            <person name="Sorek R."/>
        </authorList>
    </citation>
    <scope>FUNCTION IN ANTIVIRAL DEFENSE</scope>
    <scope>IDENTIFICATION AS A RETRON</scope>
    <scope>MUTAGENESIS OF GLU-117</scope>
    <source>
        <strain>M10</strain>
    </source>
</reference>
<dbReference type="EMBL" id="M64113">
    <property type="status" value="NOT_ANNOTATED_CDS"/>
    <property type="molecule type" value="Genomic_DNA"/>
</dbReference>
<dbReference type="EMBL" id="CP010200">
    <property type="protein sequence ID" value="APL18793.1"/>
    <property type="molecule type" value="Genomic_DNA"/>
</dbReference>
<dbReference type="RefSeq" id="WP_032254750.1">
    <property type="nucleotide sequence ID" value="NZ_BFYE01000003.1"/>
</dbReference>
<dbReference type="SMR" id="P0DV87"/>
<dbReference type="GO" id="GO:0051607">
    <property type="term" value="P:defense response to virus"/>
    <property type="evidence" value="ECO:0007669"/>
    <property type="project" value="UniProtKB-KW"/>
</dbReference>
<dbReference type="InterPro" id="IPR049725">
    <property type="entry name" value="STM3845-like"/>
</dbReference>
<dbReference type="NCBIfam" id="NF038232">
    <property type="entry name" value="STM3845_fam"/>
    <property type="match status" value="1"/>
</dbReference>
<evidence type="ECO:0000269" key="1">
    <source>
    </source>
</evidence>
<evidence type="ECO:0000269" key="2">
    <source>
    </source>
</evidence>
<evidence type="ECO:0000269" key="3">
    <source>
    </source>
</evidence>
<evidence type="ECO:0000303" key="4">
    <source>
    </source>
</evidence>
<evidence type="ECO:0000303" key="5">
    <source ref="2"/>
</evidence>
<evidence type="ECO:0000312" key="6">
    <source>
        <dbReference type="EMBL" id="APL18793.1"/>
    </source>
</evidence>
<evidence type="ECO:0000312" key="7">
    <source>
        <dbReference type="EMBL" id="M64113"/>
    </source>
</evidence>
<keyword id="KW-0051">Antiviral defense</keyword>
<protein>
    <recommendedName>
        <fullName evidence="5">Retron Ec73 putative ribosyltransferase/DNA-binding protein</fullName>
    </recommendedName>
    <alternativeName>
        <fullName evidence="4">Orf316</fullName>
    </alternativeName>
</protein>
<organism>
    <name type="scientific">Escherichia coli</name>
    <dbReference type="NCBI Taxonomy" id="562"/>
    <lineage>
        <taxon>Bacteria</taxon>
        <taxon>Pseudomonadati</taxon>
        <taxon>Pseudomonadota</taxon>
        <taxon>Gammaproteobacteria</taxon>
        <taxon>Enterobacterales</taxon>
        <taxon>Enterobacteriaceae</taxon>
        <taxon>Escherichia</taxon>
    </lineage>
</organism>
<feature type="chain" id="PRO_0000456032" description="Retron Ec73 putative ribosyltransferase/DNA-binding protein">
    <location>
        <begin position="1"/>
        <end position="316"/>
    </location>
</feature>
<feature type="mutagenesis site" description="No longer protects against bacteriophage SECphi4, SECphi6, SECphi27 or P1 infection." evidence="3">
    <original>E</original>
    <variation>Q</variation>
    <location>
        <position position="117"/>
    </location>
</feature>
<sequence length="316" mass="36478">MLTQLKKNGTEVSRATALFSSFVEKNKVKCPGNVKKFVFLCGANKNNGEPSARRLELINFSERYLNNCHFFLAELVFKELSTDEESLSDNLLDIEADLSKLADHIIIVLESYSSFTELGAFAYSKQLRKKLIIVNNTKFINEKSFINMGPIKAITQQSQQSGHFLHYKMTEGIESIERSDGIGEIFDPLYDILSKNDRAISRTLKKEELDPSSNFNKDSVRFIHDVIFVCGPLQLNELIEIITKIFGTESHYKKNLLKHLGILIAIRIISCTNGIYYSLYKEYYFKYDFDIDNISSMFKVFFLKNKPERMRVYENI</sequence>
<accession>P0DV87</accession>